<reference key="1">
    <citation type="journal article" date="2005" name="J. Bacteriol.">
        <title>Completion of the genome sequence of Brucella abortus and comparison to the highly similar genomes of Brucella melitensis and Brucella suis.</title>
        <authorList>
            <person name="Halling S.M."/>
            <person name="Peterson-Burch B.D."/>
            <person name="Bricker B.J."/>
            <person name="Zuerner R.L."/>
            <person name="Qing Z."/>
            <person name="Li L.-L."/>
            <person name="Kapur V."/>
            <person name="Alt D.P."/>
            <person name="Olsen S.C."/>
        </authorList>
    </citation>
    <scope>NUCLEOTIDE SEQUENCE [LARGE SCALE GENOMIC DNA]</scope>
    <source>
        <strain>9-941</strain>
    </source>
</reference>
<comment type="function">
    <text evidence="1">Catalyzes the attachment of serine to tRNA(Ser). Is also able to aminoacylate tRNA(Sec) with serine, to form the misacylated tRNA L-seryl-tRNA(Sec), which will be further converted into selenocysteinyl-tRNA(Sec).</text>
</comment>
<comment type="catalytic activity">
    <reaction evidence="1">
        <text>tRNA(Ser) + L-serine + ATP = L-seryl-tRNA(Ser) + AMP + diphosphate + H(+)</text>
        <dbReference type="Rhea" id="RHEA:12292"/>
        <dbReference type="Rhea" id="RHEA-COMP:9669"/>
        <dbReference type="Rhea" id="RHEA-COMP:9703"/>
        <dbReference type="ChEBI" id="CHEBI:15378"/>
        <dbReference type="ChEBI" id="CHEBI:30616"/>
        <dbReference type="ChEBI" id="CHEBI:33019"/>
        <dbReference type="ChEBI" id="CHEBI:33384"/>
        <dbReference type="ChEBI" id="CHEBI:78442"/>
        <dbReference type="ChEBI" id="CHEBI:78533"/>
        <dbReference type="ChEBI" id="CHEBI:456215"/>
        <dbReference type="EC" id="6.1.1.11"/>
    </reaction>
</comment>
<comment type="catalytic activity">
    <reaction evidence="1">
        <text>tRNA(Sec) + L-serine + ATP = L-seryl-tRNA(Sec) + AMP + diphosphate + H(+)</text>
        <dbReference type="Rhea" id="RHEA:42580"/>
        <dbReference type="Rhea" id="RHEA-COMP:9742"/>
        <dbReference type="Rhea" id="RHEA-COMP:10128"/>
        <dbReference type="ChEBI" id="CHEBI:15378"/>
        <dbReference type="ChEBI" id="CHEBI:30616"/>
        <dbReference type="ChEBI" id="CHEBI:33019"/>
        <dbReference type="ChEBI" id="CHEBI:33384"/>
        <dbReference type="ChEBI" id="CHEBI:78442"/>
        <dbReference type="ChEBI" id="CHEBI:78533"/>
        <dbReference type="ChEBI" id="CHEBI:456215"/>
        <dbReference type="EC" id="6.1.1.11"/>
    </reaction>
</comment>
<comment type="pathway">
    <text evidence="1">Aminoacyl-tRNA biosynthesis; selenocysteinyl-tRNA(Sec) biosynthesis; L-seryl-tRNA(Sec) from L-serine and tRNA(Sec): step 1/1.</text>
</comment>
<comment type="subunit">
    <text evidence="1">Homodimer. The tRNA molecule binds across the dimer.</text>
</comment>
<comment type="subcellular location">
    <subcellularLocation>
        <location evidence="1">Cytoplasm</location>
    </subcellularLocation>
</comment>
<comment type="domain">
    <text evidence="1">Consists of two distinct domains, a catalytic core and a N-terminal extension that is involved in tRNA binding.</text>
</comment>
<comment type="similarity">
    <text evidence="1">Belongs to the class-II aminoacyl-tRNA synthetase family. Type-1 seryl-tRNA synthetase subfamily.</text>
</comment>
<dbReference type="EC" id="6.1.1.11" evidence="1"/>
<dbReference type="EMBL" id="AE017223">
    <property type="protein sequence ID" value="AAX74262.1"/>
    <property type="molecule type" value="Genomic_DNA"/>
</dbReference>
<dbReference type="RefSeq" id="WP_002964015.1">
    <property type="nucleotide sequence ID" value="NC_006932.1"/>
</dbReference>
<dbReference type="SMR" id="Q57DM2"/>
<dbReference type="EnsemblBacteria" id="AAX74262">
    <property type="protein sequence ID" value="AAX74262"/>
    <property type="gene ID" value="BruAb1_0897"/>
</dbReference>
<dbReference type="GeneID" id="97533819"/>
<dbReference type="KEGG" id="bmb:BruAb1_0897"/>
<dbReference type="HOGENOM" id="CLU_023797_1_1_5"/>
<dbReference type="UniPathway" id="UPA00906">
    <property type="reaction ID" value="UER00895"/>
</dbReference>
<dbReference type="Proteomes" id="UP000000540">
    <property type="component" value="Chromosome I"/>
</dbReference>
<dbReference type="GO" id="GO:0005737">
    <property type="term" value="C:cytoplasm"/>
    <property type="evidence" value="ECO:0007669"/>
    <property type="project" value="UniProtKB-SubCell"/>
</dbReference>
<dbReference type="GO" id="GO:0005524">
    <property type="term" value="F:ATP binding"/>
    <property type="evidence" value="ECO:0007669"/>
    <property type="project" value="UniProtKB-UniRule"/>
</dbReference>
<dbReference type="GO" id="GO:0004828">
    <property type="term" value="F:serine-tRNA ligase activity"/>
    <property type="evidence" value="ECO:0007669"/>
    <property type="project" value="UniProtKB-UniRule"/>
</dbReference>
<dbReference type="GO" id="GO:0016260">
    <property type="term" value="P:selenocysteine biosynthetic process"/>
    <property type="evidence" value="ECO:0007669"/>
    <property type="project" value="UniProtKB-UniRule"/>
</dbReference>
<dbReference type="GO" id="GO:0006434">
    <property type="term" value="P:seryl-tRNA aminoacylation"/>
    <property type="evidence" value="ECO:0007669"/>
    <property type="project" value="UniProtKB-UniRule"/>
</dbReference>
<dbReference type="CDD" id="cd00770">
    <property type="entry name" value="SerRS_core"/>
    <property type="match status" value="1"/>
</dbReference>
<dbReference type="Gene3D" id="3.30.930.10">
    <property type="entry name" value="Bira Bifunctional Protein, Domain 2"/>
    <property type="match status" value="1"/>
</dbReference>
<dbReference type="Gene3D" id="1.10.287.40">
    <property type="entry name" value="Serine-tRNA synthetase, tRNA binding domain"/>
    <property type="match status" value="1"/>
</dbReference>
<dbReference type="HAMAP" id="MF_00176">
    <property type="entry name" value="Ser_tRNA_synth_type1"/>
    <property type="match status" value="1"/>
</dbReference>
<dbReference type="InterPro" id="IPR002314">
    <property type="entry name" value="aa-tRNA-synt_IIb"/>
</dbReference>
<dbReference type="InterPro" id="IPR006195">
    <property type="entry name" value="aa-tRNA-synth_II"/>
</dbReference>
<dbReference type="InterPro" id="IPR045864">
    <property type="entry name" value="aa-tRNA-synth_II/BPL/LPL"/>
</dbReference>
<dbReference type="InterPro" id="IPR002317">
    <property type="entry name" value="Ser-tRNA-ligase_type_1"/>
</dbReference>
<dbReference type="InterPro" id="IPR015866">
    <property type="entry name" value="Ser-tRNA-synth_1_N"/>
</dbReference>
<dbReference type="InterPro" id="IPR042103">
    <property type="entry name" value="SerRS_1_N_sf"/>
</dbReference>
<dbReference type="InterPro" id="IPR033729">
    <property type="entry name" value="SerRS_core"/>
</dbReference>
<dbReference type="InterPro" id="IPR010978">
    <property type="entry name" value="tRNA-bd_arm"/>
</dbReference>
<dbReference type="NCBIfam" id="TIGR00414">
    <property type="entry name" value="serS"/>
    <property type="match status" value="1"/>
</dbReference>
<dbReference type="PANTHER" id="PTHR43697:SF1">
    <property type="entry name" value="SERINE--TRNA LIGASE"/>
    <property type="match status" value="1"/>
</dbReference>
<dbReference type="PANTHER" id="PTHR43697">
    <property type="entry name" value="SERYL-TRNA SYNTHETASE"/>
    <property type="match status" value="1"/>
</dbReference>
<dbReference type="Pfam" id="PF02403">
    <property type="entry name" value="Seryl_tRNA_N"/>
    <property type="match status" value="1"/>
</dbReference>
<dbReference type="Pfam" id="PF00587">
    <property type="entry name" value="tRNA-synt_2b"/>
    <property type="match status" value="1"/>
</dbReference>
<dbReference type="PIRSF" id="PIRSF001529">
    <property type="entry name" value="Ser-tRNA-synth_IIa"/>
    <property type="match status" value="1"/>
</dbReference>
<dbReference type="PRINTS" id="PR00981">
    <property type="entry name" value="TRNASYNTHSER"/>
</dbReference>
<dbReference type="SUPFAM" id="SSF55681">
    <property type="entry name" value="Class II aaRS and biotin synthetases"/>
    <property type="match status" value="1"/>
</dbReference>
<dbReference type="SUPFAM" id="SSF46589">
    <property type="entry name" value="tRNA-binding arm"/>
    <property type="match status" value="1"/>
</dbReference>
<dbReference type="PROSITE" id="PS50862">
    <property type="entry name" value="AA_TRNA_LIGASE_II"/>
    <property type="match status" value="1"/>
</dbReference>
<sequence>MLDIKWIRENPETLDKALAKRGAAPLSSELIALDEKRREHVGKVQAAQERRNAASKEIGKAMAAKDMGTAEKLKAEVGELKDFLAHAEEDERRLSKELSDALSTIPNIPLDDVPLGKDESDNVELRRIGNPHNFSFQPKEHFELGEALGYMDFERAAKLAGARFTVLKGPLARLERALGQFMLDLHTTEHGYTEVMPPLMVRDEAVYGTGQLPKFSEDLFRTTDGRWLIPTAEVPLTNLVAEEIVDMKGLPLRFTALTPCFRSEAGSAGRDTRGMLRQHQFLKVEMVSITDAESSVAEHERMTACAEEVLKRLGLPFRTVVLCTGDMGFGAQRTYDIEVWLPGQNTYREISSCSTCGDFQGRRMNARYRPEGEKSTRFVHTLNGSGVAVGRALIAVMENYQQEDGSIHIPEALQPYMGGLTRIEKAA</sequence>
<name>SYS_BRUAB</name>
<proteinExistence type="inferred from homology"/>
<evidence type="ECO:0000255" key="1">
    <source>
        <dbReference type="HAMAP-Rule" id="MF_00176"/>
    </source>
</evidence>
<gene>
    <name evidence="1" type="primary">serS</name>
    <name type="ordered locus">BruAb1_0897</name>
</gene>
<protein>
    <recommendedName>
        <fullName evidence="1">Serine--tRNA ligase</fullName>
        <ecNumber evidence="1">6.1.1.11</ecNumber>
    </recommendedName>
    <alternativeName>
        <fullName evidence="1">Seryl-tRNA synthetase</fullName>
        <shortName evidence="1">SerRS</shortName>
    </alternativeName>
    <alternativeName>
        <fullName evidence="1">Seryl-tRNA(Ser/Sec) synthetase</fullName>
    </alternativeName>
</protein>
<feature type="chain" id="PRO_1000019626" description="Serine--tRNA ligase">
    <location>
        <begin position="1"/>
        <end position="427"/>
    </location>
</feature>
<feature type="binding site" evidence="1">
    <location>
        <begin position="231"/>
        <end position="233"/>
    </location>
    <ligand>
        <name>L-serine</name>
        <dbReference type="ChEBI" id="CHEBI:33384"/>
    </ligand>
</feature>
<feature type="binding site" evidence="1">
    <location>
        <begin position="262"/>
        <end position="264"/>
    </location>
    <ligand>
        <name>ATP</name>
        <dbReference type="ChEBI" id="CHEBI:30616"/>
    </ligand>
</feature>
<feature type="binding site" evidence="1">
    <location>
        <position position="285"/>
    </location>
    <ligand>
        <name>L-serine</name>
        <dbReference type="ChEBI" id="CHEBI:33384"/>
    </ligand>
</feature>
<feature type="binding site" evidence="1">
    <location>
        <begin position="349"/>
        <end position="352"/>
    </location>
    <ligand>
        <name>ATP</name>
        <dbReference type="ChEBI" id="CHEBI:30616"/>
    </ligand>
</feature>
<feature type="binding site" evidence="1">
    <location>
        <position position="385"/>
    </location>
    <ligand>
        <name>L-serine</name>
        <dbReference type="ChEBI" id="CHEBI:33384"/>
    </ligand>
</feature>
<keyword id="KW-0030">Aminoacyl-tRNA synthetase</keyword>
<keyword id="KW-0067">ATP-binding</keyword>
<keyword id="KW-0963">Cytoplasm</keyword>
<keyword id="KW-0436">Ligase</keyword>
<keyword id="KW-0547">Nucleotide-binding</keyword>
<keyword id="KW-0648">Protein biosynthesis</keyword>
<accession>Q57DM2</accession>
<organism>
    <name type="scientific">Brucella abortus biovar 1 (strain 9-941)</name>
    <dbReference type="NCBI Taxonomy" id="262698"/>
    <lineage>
        <taxon>Bacteria</taxon>
        <taxon>Pseudomonadati</taxon>
        <taxon>Pseudomonadota</taxon>
        <taxon>Alphaproteobacteria</taxon>
        <taxon>Hyphomicrobiales</taxon>
        <taxon>Brucellaceae</taxon>
        <taxon>Brucella/Ochrobactrum group</taxon>
        <taxon>Brucella</taxon>
    </lineage>
</organism>